<feature type="chain" id="PRO_0000137905" description="UPF0098 protein Rv1910c">
    <location>
        <begin position="1"/>
        <end position="201"/>
    </location>
</feature>
<feature type="region of interest" description="Disordered" evidence="1">
    <location>
        <begin position="125"/>
        <end position="146"/>
    </location>
</feature>
<gene>
    <name type="ordered locus">Rv1910c</name>
    <name type="ORF">MTCY180.08</name>
</gene>
<protein>
    <recommendedName>
        <fullName>UPF0098 protein Rv1910c</fullName>
    </recommendedName>
</protein>
<sequence>MESTVAHAFHRFALAILGLALPVALVAYGGNGDSRKAAPLAPKAAALGRSMPETPTGDVLTISSPAFADGAPIPEQYTCKGANIAPPLTWSAPFGGALVVDDPDAPREPYVHWIVIGIAPGAGSTADGETPGGGISLPNSSGQPAYTGPCPPAGTGTHHYRFTLYHLPAVPPLAGLAGTQAARVIAQAATMQARLIGTYEG</sequence>
<dbReference type="EMBL" id="AL123456">
    <property type="protein sequence ID" value="CCP44677.1"/>
    <property type="status" value="ALT_INIT"/>
    <property type="molecule type" value="Genomic_DNA"/>
</dbReference>
<dbReference type="PIR" id="C70519">
    <property type="entry name" value="C70519"/>
</dbReference>
<dbReference type="RefSeq" id="NP_216426.1">
    <property type="nucleotide sequence ID" value="NC_000962.3"/>
</dbReference>
<dbReference type="SMR" id="P9WFN5"/>
<dbReference type="STRING" id="83332.Rv1910c"/>
<dbReference type="PaxDb" id="83332-Rv1910c"/>
<dbReference type="DNASU" id="885897"/>
<dbReference type="GeneID" id="885897"/>
<dbReference type="KEGG" id="mtu:Rv1910c"/>
<dbReference type="PATRIC" id="fig|83332.12.peg.2134"/>
<dbReference type="TubercuList" id="Rv1910c"/>
<dbReference type="eggNOG" id="COG1881">
    <property type="taxonomic scope" value="Bacteria"/>
</dbReference>
<dbReference type="InParanoid" id="P9WFN5"/>
<dbReference type="OrthoDB" id="9797506at2"/>
<dbReference type="Proteomes" id="UP000001584">
    <property type="component" value="Chromosome"/>
</dbReference>
<dbReference type="GO" id="GO:0005576">
    <property type="term" value="C:extracellular region"/>
    <property type="evidence" value="ECO:0007005"/>
    <property type="project" value="MTBBASE"/>
</dbReference>
<dbReference type="CDD" id="cd00865">
    <property type="entry name" value="PEBP_bact_arch"/>
    <property type="match status" value="1"/>
</dbReference>
<dbReference type="FunFam" id="3.90.280.10:FF:000008">
    <property type="entry name" value="Probable lipoprotein lppC"/>
    <property type="match status" value="1"/>
</dbReference>
<dbReference type="Gene3D" id="3.90.280.10">
    <property type="entry name" value="PEBP-like"/>
    <property type="match status" value="1"/>
</dbReference>
<dbReference type="InterPro" id="IPR008914">
    <property type="entry name" value="PEBP"/>
</dbReference>
<dbReference type="InterPro" id="IPR036610">
    <property type="entry name" value="PEBP-like_sf"/>
</dbReference>
<dbReference type="InterPro" id="IPR005247">
    <property type="entry name" value="YbhB_YbcL/LppC-like"/>
</dbReference>
<dbReference type="PANTHER" id="PTHR30289:SF1">
    <property type="entry name" value="PEBP (PHOSPHATIDYLETHANOLAMINE-BINDING PROTEIN) FAMILY PROTEIN"/>
    <property type="match status" value="1"/>
</dbReference>
<dbReference type="PANTHER" id="PTHR30289">
    <property type="entry name" value="UNCHARACTERIZED PROTEIN YBCL-RELATED"/>
    <property type="match status" value="1"/>
</dbReference>
<dbReference type="Pfam" id="PF01161">
    <property type="entry name" value="PBP"/>
    <property type="match status" value="1"/>
</dbReference>
<dbReference type="SUPFAM" id="SSF49777">
    <property type="entry name" value="PEBP-like"/>
    <property type="match status" value="1"/>
</dbReference>
<proteinExistence type="evidence at protein level"/>
<evidence type="ECO:0000256" key="1">
    <source>
        <dbReference type="SAM" id="MobiDB-lite"/>
    </source>
</evidence>
<evidence type="ECO:0000305" key="2"/>
<accession>P9WFN5</accession>
<accession>L0T822</accession>
<accession>O07723</accession>
<accession>P67222</accession>
<organism>
    <name type="scientific">Mycobacterium tuberculosis (strain ATCC 25618 / H37Rv)</name>
    <dbReference type="NCBI Taxonomy" id="83332"/>
    <lineage>
        <taxon>Bacteria</taxon>
        <taxon>Bacillati</taxon>
        <taxon>Actinomycetota</taxon>
        <taxon>Actinomycetes</taxon>
        <taxon>Mycobacteriales</taxon>
        <taxon>Mycobacteriaceae</taxon>
        <taxon>Mycobacterium</taxon>
        <taxon>Mycobacterium tuberculosis complex</taxon>
    </lineage>
</organism>
<name>Y1910_MYCTU</name>
<keyword id="KW-1185">Reference proteome</keyword>
<comment type="similarity">
    <text evidence="2">Belongs to the UPF0098 family.</text>
</comment>
<comment type="sequence caution" evidence="2">
    <conflict type="erroneous initiation">
        <sequence resource="EMBL-CDS" id="CCP44677"/>
    </conflict>
    <text>Truncated N-terminus.</text>
</comment>
<reference key="1">
    <citation type="journal article" date="1998" name="Nature">
        <title>Deciphering the biology of Mycobacterium tuberculosis from the complete genome sequence.</title>
        <authorList>
            <person name="Cole S.T."/>
            <person name="Brosch R."/>
            <person name="Parkhill J."/>
            <person name="Garnier T."/>
            <person name="Churcher C.M."/>
            <person name="Harris D.E."/>
            <person name="Gordon S.V."/>
            <person name="Eiglmeier K."/>
            <person name="Gas S."/>
            <person name="Barry C.E. III"/>
            <person name="Tekaia F."/>
            <person name="Badcock K."/>
            <person name="Basham D."/>
            <person name="Brown D."/>
            <person name="Chillingworth T."/>
            <person name="Connor R."/>
            <person name="Davies R.M."/>
            <person name="Devlin K."/>
            <person name="Feltwell T."/>
            <person name="Gentles S."/>
            <person name="Hamlin N."/>
            <person name="Holroyd S."/>
            <person name="Hornsby T."/>
            <person name="Jagels K."/>
            <person name="Krogh A."/>
            <person name="McLean J."/>
            <person name="Moule S."/>
            <person name="Murphy L.D."/>
            <person name="Oliver S."/>
            <person name="Osborne J."/>
            <person name="Quail M.A."/>
            <person name="Rajandream M.A."/>
            <person name="Rogers J."/>
            <person name="Rutter S."/>
            <person name="Seeger K."/>
            <person name="Skelton S."/>
            <person name="Squares S."/>
            <person name="Squares R."/>
            <person name="Sulston J.E."/>
            <person name="Taylor K."/>
            <person name="Whitehead S."/>
            <person name="Barrell B.G."/>
        </authorList>
    </citation>
    <scope>NUCLEOTIDE SEQUENCE [LARGE SCALE GENOMIC DNA]</scope>
    <source>
        <strain>ATCC 25618 / H37Rv</strain>
    </source>
</reference>
<reference key="2">
    <citation type="journal article" date="2011" name="Mol. Cell. Proteomics">
        <title>Proteogenomic analysis of Mycobacterium tuberculosis by high resolution mass spectrometry.</title>
        <authorList>
            <person name="Kelkar D.S."/>
            <person name="Kumar D."/>
            <person name="Kumar P."/>
            <person name="Balakrishnan L."/>
            <person name="Muthusamy B."/>
            <person name="Yadav A.K."/>
            <person name="Shrivastava P."/>
            <person name="Marimuthu A."/>
            <person name="Anand S."/>
            <person name="Sundaram H."/>
            <person name="Kingsbury R."/>
            <person name="Harsha H.C."/>
            <person name="Nair B."/>
            <person name="Prasad T.S."/>
            <person name="Chauhan D.S."/>
            <person name="Katoch K."/>
            <person name="Katoch V.M."/>
            <person name="Kumar P."/>
            <person name="Chaerkady R."/>
            <person name="Ramachandran S."/>
            <person name="Dash D."/>
            <person name="Pandey A."/>
        </authorList>
    </citation>
    <scope>IDENTIFICATION BY MASS SPECTROMETRY [LARGE SCALE ANALYSIS]</scope>
    <source>
        <strain>ATCC 25618 / H37Rv</strain>
    </source>
</reference>